<comment type="function">
    <text evidence="1">Involved in the biosynthesis of the osmoprotectant glycine betaine. Catalyzes the irreversible oxidation of betaine aldehyde to the corresponding acid.</text>
</comment>
<comment type="catalytic activity">
    <reaction evidence="1">
        <text>betaine aldehyde + NAD(+) + H2O = glycine betaine + NADH + 2 H(+)</text>
        <dbReference type="Rhea" id="RHEA:15305"/>
        <dbReference type="ChEBI" id="CHEBI:15377"/>
        <dbReference type="ChEBI" id="CHEBI:15378"/>
        <dbReference type="ChEBI" id="CHEBI:15710"/>
        <dbReference type="ChEBI" id="CHEBI:17750"/>
        <dbReference type="ChEBI" id="CHEBI:57540"/>
        <dbReference type="ChEBI" id="CHEBI:57945"/>
        <dbReference type="EC" id="1.2.1.8"/>
    </reaction>
    <physiologicalReaction direction="left-to-right" evidence="1">
        <dbReference type="Rhea" id="RHEA:15306"/>
    </physiologicalReaction>
</comment>
<comment type="cofactor">
    <cofactor evidence="1">
        <name>K(+)</name>
        <dbReference type="ChEBI" id="CHEBI:29103"/>
    </cofactor>
    <text evidence="1">Binds 2 potassium ions per subunit.</text>
</comment>
<comment type="pathway">
    <text evidence="1">Amine and polyamine biosynthesis; betaine biosynthesis via choline pathway; betaine from betaine aldehyde: step 1/1.</text>
</comment>
<comment type="subunit">
    <text evidence="1">Dimer of dimers.</text>
</comment>
<comment type="similarity">
    <text evidence="1">Belongs to the aldehyde dehydrogenase family.</text>
</comment>
<organism>
    <name type="scientific">Ectopseudomonas mendocina (strain ymp)</name>
    <name type="common">Pseudomonas mendocina</name>
    <dbReference type="NCBI Taxonomy" id="399739"/>
    <lineage>
        <taxon>Bacteria</taxon>
        <taxon>Pseudomonadati</taxon>
        <taxon>Pseudomonadota</taxon>
        <taxon>Gammaproteobacteria</taxon>
        <taxon>Pseudomonadales</taxon>
        <taxon>Pseudomonadaceae</taxon>
        <taxon>Ectopseudomonas</taxon>
    </lineage>
</organism>
<reference key="1">
    <citation type="submission" date="2007-04" db="EMBL/GenBank/DDBJ databases">
        <title>Complete sequence of Pseudomonas mendocina ymp.</title>
        <authorList>
            <consortium name="US DOE Joint Genome Institute"/>
            <person name="Copeland A."/>
            <person name="Lucas S."/>
            <person name="Lapidus A."/>
            <person name="Barry K."/>
            <person name="Glavina del Rio T."/>
            <person name="Dalin E."/>
            <person name="Tice H."/>
            <person name="Pitluck S."/>
            <person name="Kiss H."/>
            <person name="Brettin T."/>
            <person name="Detter J.C."/>
            <person name="Bruce D."/>
            <person name="Han C."/>
            <person name="Schmutz J."/>
            <person name="Larimer F."/>
            <person name="Land M."/>
            <person name="Hauser L."/>
            <person name="Kyrpides N."/>
            <person name="Mikhailova N."/>
            <person name="Hersman L."/>
            <person name="Dubois J."/>
            <person name="Maurice P."/>
            <person name="Richardson P."/>
        </authorList>
    </citation>
    <scope>NUCLEOTIDE SEQUENCE [LARGE SCALE GENOMIC DNA]</scope>
    <source>
        <strain>ymp</strain>
    </source>
</reference>
<evidence type="ECO:0000255" key="1">
    <source>
        <dbReference type="HAMAP-Rule" id="MF_00804"/>
    </source>
</evidence>
<gene>
    <name evidence="1" type="primary">betB</name>
    <name type="ordered locus">Pmen_0482</name>
</gene>
<name>BETB_ECTM1</name>
<keyword id="KW-0479">Metal-binding</keyword>
<keyword id="KW-0520">NAD</keyword>
<keyword id="KW-0521">NADP</keyword>
<keyword id="KW-0558">Oxidation</keyword>
<keyword id="KW-0560">Oxidoreductase</keyword>
<keyword id="KW-0630">Potassium</keyword>
<protein>
    <recommendedName>
        <fullName evidence="1">Betaine aldehyde dehydrogenase</fullName>
        <shortName evidence="1">BADH</shortName>
        <ecNumber evidence="1">1.2.1.8</ecNumber>
    </recommendedName>
</protein>
<dbReference type="EC" id="1.2.1.8" evidence="1"/>
<dbReference type="EMBL" id="CP000680">
    <property type="protein sequence ID" value="ABP83252.1"/>
    <property type="molecule type" value="Genomic_DNA"/>
</dbReference>
<dbReference type="SMR" id="A4XPI6"/>
<dbReference type="STRING" id="399739.Pmen_0482"/>
<dbReference type="KEGG" id="pmy:Pmen_0482"/>
<dbReference type="PATRIC" id="fig|399739.8.peg.491"/>
<dbReference type="eggNOG" id="COG1012">
    <property type="taxonomic scope" value="Bacteria"/>
</dbReference>
<dbReference type="HOGENOM" id="CLU_005391_0_2_6"/>
<dbReference type="OrthoDB" id="9812625at2"/>
<dbReference type="UniPathway" id="UPA00529">
    <property type="reaction ID" value="UER00386"/>
</dbReference>
<dbReference type="GO" id="GO:0008802">
    <property type="term" value="F:betaine-aldehyde dehydrogenase (NAD+) activity"/>
    <property type="evidence" value="ECO:0007669"/>
    <property type="project" value="UniProtKB-UniRule"/>
</dbReference>
<dbReference type="GO" id="GO:0046872">
    <property type="term" value="F:metal ion binding"/>
    <property type="evidence" value="ECO:0007669"/>
    <property type="project" value="UniProtKB-KW"/>
</dbReference>
<dbReference type="GO" id="GO:0019285">
    <property type="term" value="P:glycine betaine biosynthetic process from choline"/>
    <property type="evidence" value="ECO:0007669"/>
    <property type="project" value="UniProtKB-UniRule"/>
</dbReference>
<dbReference type="CDD" id="cd07090">
    <property type="entry name" value="ALDH_F9_TMBADH"/>
    <property type="match status" value="1"/>
</dbReference>
<dbReference type="FunFam" id="3.40.309.10:FF:000014">
    <property type="entry name" value="NAD/NADP-dependent betaine aldehyde dehydrogenase"/>
    <property type="match status" value="1"/>
</dbReference>
<dbReference type="FunFam" id="3.40.605.10:FF:000007">
    <property type="entry name" value="NAD/NADP-dependent betaine aldehyde dehydrogenase"/>
    <property type="match status" value="1"/>
</dbReference>
<dbReference type="Gene3D" id="3.40.605.10">
    <property type="entry name" value="Aldehyde Dehydrogenase, Chain A, domain 1"/>
    <property type="match status" value="1"/>
</dbReference>
<dbReference type="Gene3D" id="3.40.309.10">
    <property type="entry name" value="Aldehyde Dehydrogenase, Chain A, domain 2"/>
    <property type="match status" value="1"/>
</dbReference>
<dbReference type="HAMAP" id="MF_00804">
    <property type="entry name" value="BADH"/>
    <property type="match status" value="1"/>
</dbReference>
<dbReference type="InterPro" id="IPR016161">
    <property type="entry name" value="Ald_DH/histidinol_DH"/>
</dbReference>
<dbReference type="InterPro" id="IPR016163">
    <property type="entry name" value="Ald_DH_C"/>
</dbReference>
<dbReference type="InterPro" id="IPR016160">
    <property type="entry name" value="Ald_DH_CS_CYS"/>
</dbReference>
<dbReference type="InterPro" id="IPR029510">
    <property type="entry name" value="Ald_DH_CS_GLU"/>
</dbReference>
<dbReference type="InterPro" id="IPR016162">
    <property type="entry name" value="Ald_DH_N"/>
</dbReference>
<dbReference type="InterPro" id="IPR015590">
    <property type="entry name" value="Aldehyde_DH_dom"/>
</dbReference>
<dbReference type="InterPro" id="IPR011264">
    <property type="entry name" value="BADH"/>
</dbReference>
<dbReference type="NCBIfam" id="TIGR01804">
    <property type="entry name" value="BADH"/>
    <property type="match status" value="1"/>
</dbReference>
<dbReference type="NCBIfam" id="NF009725">
    <property type="entry name" value="PRK13252.1"/>
    <property type="match status" value="1"/>
</dbReference>
<dbReference type="PANTHER" id="PTHR11699">
    <property type="entry name" value="ALDEHYDE DEHYDROGENASE-RELATED"/>
    <property type="match status" value="1"/>
</dbReference>
<dbReference type="Pfam" id="PF00171">
    <property type="entry name" value="Aldedh"/>
    <property type="match status" value="1"/>
</dbReference>
<dbReference type="SUPFAM" id="SSF53720">
    <property type="entry name" value="ALDH-like"/>
    <property type="match status" value="1"/>
</dbReference>
<dbReference type="PROSITE" id="PS00070">
    <property type="entry name" value="ALDEHYDE_DEHYDR_CYS"/>
    <property type="match status" value="1"/>
</dbReference>
<dbReference type="PROSITE" id="PS00687">
    <property type="entry name" value="ALDEHYDE_DEHYDR_GLU"/>
    <property type="match status" value="1"/>
</dbReference>
<sequence length="490" mass="53122">MPRFAEQQLYIGGQYVAASSGQTFDSINPATGEVLAKVQRASQADVDRAVASAAEGQKVWAAMTAMQRSRILRRAVDILRERNDELAELETLDTGKPLSETRYVDIVTGADVLEYYAGLIPAIEGEQIPLRESSFVYTRREPLGVVAGIGAWNYPIQIALWKSAPALAAGNAMIFKPSEVTSLTALKLAEIYTEAGLPAGVFNVLTGSGREVGQWLTEHPGIEKVSFTGGTVTGKKVMASASSSSLKEVTMELGGKSPLIVFEDADLDRAADIAVMANFYSSGQVCTNGTRVFVPRMLQARFEAKVLERVKRIRLGDPLDDATNFGPLVSYAHMESVLGYIEKGRSEGARLLIGGTRVSDGDYAKGAYVAPTVFTDCRDDMTIVREEIFGPVMSILIYDSEEEVIRRANDTDYGLAAGVVTRDLNRAHRVIHKLEAGICWINTWGESPAEMPVGGYKQSGVGRENGLVTLGHYTRIKSVQVELGGYSSVF</sequence>
<proteinExistence type="inferred from homology"/>
<accession>A4XPI6</accession>
<feature type="chain" id="PRO_1000047048" description="Betaine aldehyde dehydrogenase">
    <location>
        <begin position="1"/>
        <end position="490"/>
    </location>
</feature>
<feature type="active site" description="Charge relay system" evidence="1">
    <location>
        <position position="162"/>
    </location>
</feature>
<feature type="active site" description="Proton acceptor" evidence="1">
    <location>
        <position position="252"/>
    </location>
</feature>
<feature type="active site" description="Nucleophile" evidence="1">
    <location>
        <position position="286"/>
    </location>
</feature>
<feature type="active site" description="Charge relay system" evidence="1">
    <location>
        <position position="464"/>
    </location>
</feature>
<feature type="binding site" evidence="1">
    <location>
        <position position="26"/>
    </location>
    <ligand>
        <name>K(+)</name>
        <dbReference type="ChEBI" id="CHEBI:29103"/>
        <label>1</label>
    </ligand>
</feature>
<feature type="binding site" evidence="1">
    <location>
        <position position="27"/>
    </location>
    <ligand>
        <name>K(+)</name>
        <dbReference type="ChEBI" id="CHEBI:29103"/>
        <label>1</label>
    </ligand>
</feature>
<feature type="binding site" evidence="1">
    <location>
        <position position="93"/>
    </location>
    <ligand>
        <name>K(+)</name>
        <dbReference type="ChEBI" id="CHEBI:29103"/>
        <label>1</label>
    </ligand>
</feature>
<feature type="binding site" evidence="1">
    <location>
        <begin position="150"/>
        <end position="152"/>
    </location>
    <ligand>
        <name>NAD(+)</name>
        <dbReference type="ChEBI" id="CHEBI:57540"/>
    </ligand>
</feature>
<feature type="binding site" evidence="1">
    <location>
        <begin position="176"/>
        <end position="179"/>
    </location>
    <ligand>
        <name>NAD(+)</name>
        <dbReference type="ChEBI" id="CHEBI:57540"/>
    </ligand>
</feature>
<feature type="binding site" evidence="1">
    <location>
        <position position="180"/>
    </location>
    <ligand>
        <name>K(+)</name>
        <dbReference type="ChEBI" id="CHEBI:29103"/>
        <label>1</label>
    </ligand>
</feature>
<feature type="binding site" evidence="1">
    <location>
        <begin position="230"/>
        <end position="233"/>
    </location>
    <ligand>
        <name>NAD(+)</name>
        <dbReference type="ChEBI" id="CHEBI:57540"/>
    </ligand>
</feature>
<feature type="binding site" evidence="1">
    <location>
        <position position="246"/>
    </location>
    <ligand>
        <name>K(+)</name>
        <dbReference type="ChEBI" id="CHEBI:29103"/>
        <label>2</label>
    </ligand>
</feature>
<feature type="binding site" evidence="1">
    <location>
        <position position="254"/>
    </location>
    <ligand>
        <name>NAD(+)</name>
        <dbReference type="ChEBI" id="CHEBI:57540"/>
    </ligand>
</feature>
<feature type="binding site" description="covalent" evidence="1">
    <location>
        <position position="286"/>
    </location>
    <ligand>
        <name>NAD(+)</name>
        <dbReference type="ChEBI" id="CHEBI:57540"/>
    </ligand>
</feature>
<feature type="binding site" evidence="1">
    <location>
        <position position="387"/>
    </location>
    <ligand>
        <name>NAD(+)</name>
        <dbReference type="ChEBI" id="CHEBI:57540"/>
    </ligand>
</feature>
<feature type="binding site" evidence="1">
    <location>
        <position position="457"/>
    </location>
    <ligand>
        <name>K(+)</name>
        <dbReference type="ChEBI" id="CHEBI:29103"/>
        <label>2</label>
    </ligand>
</feature>
<feature type="binding site" evidence="1">
    <location>
        <position position="460"/>
    </location>
    <ligand>
        <name>K(+)</name>
        <dbReference type="ChEBI" id="CHEBI:29103"/>
        <label>2</label>
    </ligand>
</feature>
<feature type="site" description="Seems to be a necessary countercharge to the potassium cations" evidence="1">
    <location>
        <position position="248"/>
    </location>
</feature>
<feature type="modified residue" description="Cysteine sulfenic acid (-SOH)" evidence="1">
    <location>
        <position position="286"/>
    </location>
</feature>